<dbReference type="EMBL" id="AY764036">
    <property type="protein sequence ID" value="AAX13343.1"/>
    <property type="molecule type" value="mRNA"/>
</dbReference>
<dbReference type="EMBL" id="AK021774">
    <property type="protein sequence ID" value="BAB13892.1"/>
    <property type="molecule type" value="mRNA"/>
</dbReference>
<dbReference type="EMBL" id="AK223340">
    <property type="protein sequence ID" value="BAD97060.1"/>
    <property type="molecule type" value="mRNA"/>
</dbReference>
<dbReference type="EMBL" id="AL137881">
    <property type="status" value="NOT_ANNOTATED_CDS"/>
    <property type="molecule type" value="Genomic_DNA"/>
</dbReference>
<dbReference type="EMBL" id="CH471075">
    <property type="protein sequence ID" value="EAX08864.1"/>
    <property type="molecule type" value="Genomic_DNA"/>
</dbReference>
<dbReference type="EMBL" id="BC001397">
    <property type="protein sequence ID" value="AAH01397.1"/>
    <property type="status" value="ALT_SEQ"/>
    <property type="molecule type" value="mRNA"/>
</dbReference>
<dbReference type="EMBL" id="BC005088">
    <property type="protein sequence ID" value="AAH05088.1"/>
    <property type="molecule type" value="mRNA"/>
</dbReference>
<dbReference type="EMBL" id="BC007332">
    <property type="protein sequence ID" value="AAH07332.1"/>
    <property type="status" value="ALT_SEQ"/>
    <property type="molecule type" value="mRNA"/>
</dbReference>
<dbReference type="EMBL" id="BC010174">
    <property type="protein sequence ID" value="AAH10174.1"/>
    <property type="status" value="ALT_SEQ"/>
    <property type="molecule type" value="mRNA"/>
</dbReference>
<dbReference type="CCDS" id="CCDS45047.1">
    <molecule id="Q5TBB1-2"/>
</dbReference>
<dbReference type="CCDS" id="CCDS9425.1">
    <molecule id="Q5TBB1-1"/>
</dbReference>
<dbReference type="RefSeq" id="NP_001135751.1">
    <molecule id="Q5TBB1-2"/>
    <property type="nucleotide sequence ID" value="NM_001142279.2"/>
</dbReference>
<dbReference type="RefSeq" id="NP_078846.2">
    <molecule id="Q5TBB1-1"/>
    <property type="nucleotide sequence ID" value="NM_024570.4"/>
</dbReference>
<dbReference type="PDB" id="3P56">
    <property type="method" value="X-ray"/>
    <property type="resolution" value="4.06 A"/>
    <property type="chains" value="B/E=2-226"/>
</dbReference>
<dbReference type="PDB" id="3P87">
    <property type="method" value="X-ray"/>
    <property type="resolution" value="2.99 A"/>
    <property type="chains" value="G/H/I/J/K/L=290-312"/>
</dbReference>
<dbReference type="PDB" id="3PUF">
    <property type="method" value="X-ray"/>
    <property type="resolution" value="3.10 A"/>
    <property type="chains" value="B/E/H/K/N/Q=14-233"/>
</dbReference>
<dbReference type="PDB" id="8YJZ">
    <property type="method" value="EM"/>
    <property type="resolution" value="5.15 A"/>
    <property type="chains" value="G=1-312"/>
</dbReference>
<dbReference type="PDBsum" id="3P56"/>
<dbReference type="PDBsum" id="3P87"/>
<dbReference type="PDBsum" id="3PUF"/>
<dbReference type="PDBsum" id="8YJZ"/>
<dbReference type="EMDB" id="EMD-39354"/>
<dbReference type="SMR" id="Q5TBB1"/>
<dbReference type="BioGRID" id="122751">
    <property type="interactions" value="57"/>
</dbReference>
<dbReference type="ComplexPortal" id="CPX-745">
    <property type="entry name" value="RNase H2 complex"/>
</dbReference>
<dbReference type="FunCoup" id="Q5TBB1">
    <property type="interactions" value="1263"/>
</dbReference>
<dbReference type="IntAct" id="Q5TBB1">
    <property type="interactions" value="44"/>
</dbReference>
<dbReference type="MINT" id="Q5TBB1"/>
<dbReference type="STRING" id="9606.ENSP00000337623"/>
<dbReference type="iPTMnet" id="Q5TBB1"/>
<dbReference type="PhosphoSitePlus" id="Q5TBB1"/>
<dbReference type="BioMuta" id="RNASEH2B"/>
<dbReference type="DMDM" id="74745929"/>
<dbReference type="jPOST" id="Q5TBB1"/>
<dbReference type="MassIVE" id="Q5TBB1"/>
<dbReference type="PaxDb" id="9606-ENSP00000337623"/>
<dbReference type="PeptideAtlas" id="Q5TBB1"/>
<dbReference type="ProteomicsDB" id="33763"/>
<dbReference type="ProteomicsDB" id="64894">
    <molecule id="Q5TBB1-1"/>
</dbReference>
<dbReference type="Pumba" id="Q5TBB1"/>
<dbReference type="Antibodypedia" id="42315">
    <property type="antibodies" value="207 antibodies from 22 providers"/>
</dbReference>
<dbReference type="DNASU" id="79621"/>
<dbReference type="Ensembl" id="ENST00000336617.8">
    <molecule id="Q5TBB1-1"/>
    <property type="protein sequence ID" value="ENSP00000337623.2"/>
    <property type="gene ID" value="ENSG00000136104.22"/>
</dbReference>
<dbReference type="Ensembl" id="ENST00000422660.6">
    <molecule id="Q5TBB1-2"/>
    <property type="protein sequence ID" value="ENSP00000389877.1"/>
    <property type="gene ID" value="ENSG00000136104.22"/>
</dbReference>
<dbReference type="GeneID" id="79621"/>
<dbReference type="KEGG" id="hsa:79621"/>
<dbReference type="MANE-Select" id="ENST00000336617.8">
    <property type="protein sequence ID" value="ENSP00000337623.2"/>
    <property type="RefSeq nucleotide sequence ID" value="NM_024570.4"/>
    <property type="RefSeq protein sequence ID" value="NP_078846.2"/>
</dbReference>
<dbReference type="UCSC" id="uc001vfa.4">
    <molecule id="Q5TBB1-1"/>
    <property type="organism name" value="human"/>
</dbReference>
<dbReference type="AGR" id="HGNC:25671"/>
<dbReference type="CTD" id="79621"/>
<dbReference type="DisGeNET" id="79621"/>
<dbReference type="GeneCards" id="RNASEH2B"/>
<dbReference type="GeneReviews" id="RNASEH2B"/>
<dbReference type="HGNC" id="HGNC:25671">
    <property type="gene designation" value="RNASEH2B"/>
</dbReference>
<dbReference type="HPA" id="ENSG00000136104">
    <property type="expression patterns" value="Tissue enhanced (lymphoid)"/>
</dbReference>
<dbReference type="MalaCards" id="RNASEH2B"/>
<dbReference type="MIM" id="610181">
    <property type="type" value="phenotype"/>
</dbReference>
<dbReference type="MIM" id="610326">
    <property type="type" value="gene"/>
</dbReference>
<dbReference type="neXtProt" id="NX_Q5TBB1"/>
<dbReference type="OpenTargets" id="ENSG00000136104"/>
<dbReference type="Orphanet" id="51">
    <property type="disease" value="Aicardi-Goutieres syndrome"/>
</dbReference>
<dbReference type="Orphanet" id="689234">
    <property type="disease" value="RNASEH2B-related hereditary spastic paraplegia"/>
</dbReference>
<dbReference type="PharmGKB" id="PA162401418"/>
<dbReference type="VEuPathDB" id="HostDB:ENSG00000136104"/>
<dbReference type="eggNOG" id="KOG4705">
    <property type="taxonomic scope" value="Eukaryota"/>
</dbReference>
<dbReference type="GeneTree" id="ENSGT00390000011439"/>
<dbReference type="HOGENOM" id="CLU_059802_0_0_1"/>
<dbReference type="InParanoid" id="Q5TBB1"/>
<dbReference type="OMA" id="AQWVLIA"/>
<dbReference type="OrthoDB" id="29098at2759"/>
<dbReference type="PAN-GO" id="Q5TBB1">
    <property type="GO annotations" value="4 GO annotations based on evolutionary models"/>
</dbReference>
<dbReference type="PhylomeDB" id="Q5TBB1"/>
<dbReference type="TreeFam" id="TF105250"/>
<dbReference type="BioCyc" id="MetaCyc:HS13612-MONOMER"/>
<dbReference type="BRENDA" id="3.1.26.4">
    <property type="organism ID" value="2681"/>
</dbReference>
<dbReference type="PathwayCommons" id="Q5TBB1"/>
<dbReference type="SignaLink" id="Q5TBB1"/>
<dbReference type="BioGRID-ORCS" id="79621">
    <property type="hits" value="106 hits in 1159 CRISPR screens"/>
</dbReference>
<dbReference type="ChiTaRS" id="RNASEH2B">
    <property type="organism name" value="human"/>
</dbReference>
<dbReference type="EvolutionaryTrace" id="Q5TBB1"/>
<dbReference type="GenomeRNAi" id="79621"/>
<dbReference type="Pharos" id="Q5TBB1">
    <property type="development level" value="Tbio"/>
</dbReference>
<dbReference type="PRO" id="PR:Q5TBB1"/>
<dbReference type="Proteomes" id="UP000005640">
    <property type="component" value="Chromosome 13"/>
</dbReference>
<dbReference type="RNAct" id="Q5TBB1">
    <property type="molecule type" value="protein"/>
</dbReference>
<dbReference type="Bgee" id="ENSG00000136104">
    <property type="expression patterns" value="Expressed in calcaneal tendon and 162 other cell types or tissues"/>
</dbReference>
<dbReference type="ExpressionAtlas" id="Q5TBB1">
    <property type="expression patterns" value="baseline and differential"/>
</dbReference>
<dbReference type="GO" id="GO:0005654">
    <property type="term" value="C:nucleoplasm"/>
    <property type="evidence" value="ECO:0000314"/>
    <property type="project" value="HPA"/>
</dbReference>
<dbReference type="GO" id="GO:0032299">
    <property type="term" value="C:ribonuclease H2 complex"/>
    <property type="evidence" value="ECO:0000314"/>
    <property type="project" value="UniProtKB"/>
</dbReference>
<dbReference type="GO" id="GO:0048144">
    <property type="term" value="P:fibroblast proliferation"/>
    <property type="evidence" value="ECO:0007669"/>
    <property type="project" value="Ensembl"/>
</dbReference>
<dbReference type="GO" id="GO:0010467">
    <property type="term" value="P:gene expression"/>
    <property type="evidence" value="ECO:0007669"/>
    <property type="project" value="Ensembl"/>
</dbReference>
<dbReference type="GO" id="GO:0001701">
    <property type="term" value="P:in utero embryonic development"/>
    <property type="evidence" value="ECO:0007669"/>
    <property type="project" value="Ensembl"/>
</dbReference>
<dbReference type="GO" id="GO:0006298">
    <property type="term" value="P:mismatch repair"/>
    <property type="evidence" value="ECO:0000303"/>
    <property type="project" value="ComplexPortal"/>
</dbReference>
<dbReference type="GO" id="GO:0010629">
    <property type="term" value="P:negative regulation of gene expression"/>
    <property type="evidence" value="ECO:0007669"/>
    <property type="project" value="Ensembl"/>
</dbReference>
<dbReference type="GO" id="GO:0048146">
    <property type="term" value="P:positive regulation of fibroblast proliferation"/>
    <property type="evidence" value="ECO:0007669"/>
    <property type="project" value="Ensembl"/>
</dbReference>
<dbReference type="GO" id="GO:2000001">
    <property type="term" value="P:regulation of DNA damage checkpoint"/>
    <property type="evidence" value="ECO:0007669"/>
    <property type="project" value="Ensembl"/>
</dbReference>
<dbReference type="GO" id="GO:0010389">
    <property type="term" value="P:regulation of G2/M transition of mitotic cell cycle"/>
    <property type="evidence" value="ECO:0007669"/>
    <property type="project" value="Ensembl"/>
</dbReference>
<dbReference type="GO" id="GO:0009259">
    <property type="term" value="P:ribonucleotide metabolic process"/>
    <property type="evidence" value="ECO:0007669"/>
    <property type="project" value="Ensembl"/>
</dbReference>
<dbReference type="GO" id="GO:0006401">
    <property type="term" value="P:RNA catabolic process"/>
    <property type="evidence" value="ECO:0000314"/>
    <property type="project" value="UniProtKB"/>
</dbReference>
<dbReference type="CDD" id="cd09270">
    <property type="entry name" value="RNase_H2-B"/>
    <property type="match status" value="1"/>
</dbReference>
<dbReference type="FunFam" id="1.10.20.120:FF:000001">
    <property type="entry name" value="Ribonuclease H2 subunit B"/>
    <property type="match status" value="1"/>
</dbReference>
<dbReference type="FunFam" id="2.20.25.530:FF:000001">
    <property type="entry name" value="Ribonuclease H2 subunit B"/>
    <property type="match status" value="1"/>
</dbReference>
<dbReference type="Gene3D" id="1.10.20.120">
    <property type="match status" value="1"/>
</dbReference>
<dbReference type="Gene3D" id="2.20.25.530">
    <property type="match status" value="1"/>
</dbReference>
<dbReference type="IDEAL" id="IID00600"/>
<dbReference type="InterPro" id="IPR040456">
    <property type="entry name" value="RNase_H2_suB"/>
</dbReference>
<dbReference type="InterPro" id="IPR019024">
    <property type="entry name" value="RNase_H2_suB_wHTH"/>
</dbReference>
<dbReference type="InterPro" id="IPR041195">
    <property type="entry name" value="Rnh202_N"/>
</dbReference>
<dbReference type="PANTHER" id="PTHR13383">
    <property type="entry name" value="RIBONUCLEASE H2 SUBUNIT B"/>
    <property type="match status" value="1"/>
</dbReference>
<dbReference type="PANTHER" id="PTHR13383:SF11">
    <property type="entry name" value="RIBONUCLEASE H2 SUBUNIT B"/>
    <property type="match status" value="1"/>
</dbReference>
<dbReference type="Pfam" id="PF09468">
    <property type="entry name" value="RNase_H2-Ydr279"/>
    <property type="match status" value="1"/>
</dbReference>
<dbReference type="Pfam" id="PF17745">
    <property type="entry name" value="Ydr279_N"/>
    <property type="match status" value="1"/>
</dbReference>
<accession>Q5TBB1</accession>
<accession>G3XAJ1</accession>
<accession>Q05DR2</accession>
<accession>Q6PK48</accession>
<accession>Q9HAF7</accession>
<name>RNH2B_HUMAN</name>
<keyword id="KW-0002">3D-structure</keyword>
<keyword id="KW-0007">Acetylation</keyword>
<keyword id="KW-0948">Aicardi-Goutieres syndrome</keyword>
<keyword id="KW-0025">Alternative splicing</keyword>
<keyword id="KW-0225">Disease variant</keyword>
<keyword id="KW-0539">Nucleus</keyword>
<keyword id="KW-0597">Phosphoprotein</keyword>
<keyword id="KW-1267">Proteomics identification</keyword>
<keyword id="KW-1185">Reference proteome</keyword>
<feature type="initiator methionine" description="Removed" evidence="8 9">
    <location>
        <position position="1"/>
    </location>
</feature>
<feature type="chain" id="PRO_0000248378" description="Ribonuclease H2 subunit B">
    <location>
        <begin position="2"/>
        <end position="312"/>
    </location>
</feature>
<feature type="region of interest" description="Disordered" evidence="1">
    <location>
        <begin position="236"/>
        <end position="256"/>
    </location>
</feature>
<feature type="modified residue" description="N-acetylalanine" evidence="8 9">
    <location>
        <position position="2"/>
    </location>
</feature>
<feature type="modified residue" description="N6-acetyllysine" evidence="7">
    <location>
        <position position="295"/>
    </location>
</feature>
<feature type="modified residue" description="Phosphoserine" evidence="10">
    <location>
        <position position="296"/>
    </location>
</feature>
<feature type="splice variant" id="VSP_054039" description="In isoform 2." evidence="6">
    <original>KIKLSDEPVE</original>
    <variation>MAAQRQKRGK</variation>
    <location>
        <begin position="248"/>
        <end position="257"/>
    </location>
</feature>
<feature type="splice variant" id="VSP_054040" description="In isoform 2." evidence="6">
    <location>
        <begin position="258"/>
        <end position="312"/>
    </location>
</feature>
<feature type="sequence variant" id="VAR_070611" description="In AGS2; dbSNP:rs79564863." evidence="3">
    <original>P</original>
    <variation>H</variation>
    <location>
        <position position="43"/>
    </location>
</feature>
<feature type="sequence variant" id="VAR_027280" description="In AGS2; heterozygous compound with T-177; dbSNP:rs75325951." evidence="2 3">
    <original>L</original>
    <variation>R</variation>
    <location>
        <position position="60"/>
    </location>
</feature>
<feature type="sequence variant" id="VAR_070612" description="In AGS2; reduces stability of the RNase complex; dbSNP:rs78071087." evidence="3 5">
    <original>W</original>
    <variation>L</variation>
    <location>
        <position position="73"/>
    </location>
</feature>
<feature type="sequence variant" id="VAR_070613" description="In AGS2; reduces stability of the RNase complex; dbSNP:rs76158094." evidence="3 5">
    <original>G</original>
    <variation>S</variation>
    <location>
        <position position="83"/>
    </location>
</feature>
<feature type="sequence variant" id="VAR_027281" description="In AGS2; heterozygous compound with T-177; reduces stability of the RNase complex; dbSNP:rs77931005." evidence="2 3 5">
    <original>H</original>
    <variation>R</variation>
    <location>
        <position position="86"/>
    </location>
</feature>
<feature type="sequence variant" id="VAR_070614" description="In AGS2; dbSNP:rs78705382." evidence="3">
    <original>L</original>
    <variation>F</variation>
    <location>
        <position position="138"/>
    </location>
</feature>
<feature type="sequence variant" id="VAR_070615" description="In AGS2; dbSNP:rs76219783." evidence="3">
    <original>S</original>
    <variation>I</variation>
    <location>
        <position position="159"/>
    </location>
</feature>
<feature type="sequence variant" id="VAR_027282" description="In AGS2; dbSNP:rs75971463." evidence="2 3">
    <original>K</original>
    <variation>T</variation>
    <location>
        <position position="162"/>
    </location>
</feature>
<feature type="sequence variant" id="VAR_027283" description="In AGS2; heterozygous compound with T-177; dbSNP:rs79310911." evidence="2 3">
    <original>T</original>
    <variation>I</variation>
    <location>
        <position position="163"/>
    </location>
</feature>
<feature type="sequence variant" id="VAR_027284" description="In AGS2; frequent mutation; dbSNP:rs75184679." evidence="2 3 4">
    <original>A</original>
    <variation>T</variation>
    <location>
        <position position="177"/>
    </location>
</feature>
<feature type="sequence variant" id="VAR_070616" description="In AGS2; dbSNP:rs77377571." evidence="3">
    <original>V</original>
    <variation>M</variation>
    <location>
        <position position="183"/>
    </location>
</feature>
<feature type="sequence variant" id="VAR_027285" description="In AGS2; dbSNP:rs74555752." evidence="2 3">
    <original>V</original>
    <variation>G</variation>
    <location>
        <position position="185"/>
    </location>
</feature>
<feature type="sequence variant" id="VAR_027286" description="In AGS2; heterozygous compound with a nonsense mutation; reduces stability of the RNase complex; dbSNP:rs77391331." evidence="2 3 5">
    <original>Y</original>
    <variation>H</variation>
    <location>
        <position position="219"/>
    </location>
</feature>
<feature type="sequence variant" id="VAR_070617" description="In AGS2; dbSNP:rs768565639." evidence="4">
    <original>S</original>
    <variation>P</variation>
    <location>
        <position position="229"/>
    </location>
</feature>
<feature type="sequence conflict" description="In Ref. 1; AAX13343 and 2; BAB13892." evidence="6" ref="1 2">
    <original>F</original>
    <variation>L</variation>
    <location>
        <position position="61"/>
    </location>
</feature>
<feature type="sequence conflict" description="In Ref. 6; AAH05088." evidence="6" ref="6">
    <original>N</original>
    <variation>K</variation>
    <location>
        <position position="305"/>
    </location>
</feature>
<feature type="strand" evidence="12">
    <location>
        <begin position="14"/>
        <end position="21"/>
    </location>
</feature>
<feature type="strand" evidence="12">
    <location>
        <begin position="36"/>
        <end position="41"/>
    </location>
</feature>
<feature type="turn" evidence="12">
    <location>
        <begin position="43"/>
        <end position="45"/>
    </location>
</feature>
<feature type="strand" evidence="12">
    <location>
        <begin position="47"/>
        <end position="54"/>
    </location>
</feature>
<feature type="turn" evidence="12">
    <location>
        <begin position="55"/>
        <end position="58"/>
    </location>
</feature>
<feature type="strand" evidence="12">
    <location>
        <begin position="59"/>
        <end position="66"/>
    </location>
</feature>
<feature type="strand" evidence="12">
    <location>
        <begin position="72"/>
        <end position="75"/>
    </location>
</feature>
<feature type="strand" evidence="12">
    <location>
        <begin position="78"/>
        <end position="81"/>
    </location>
</feature>
<feature type="strand" evidence="12">
    <location>
        <begin position="85"/>
        <end position="90"/>
    </location>
</feature>
<feature type="helix" evidence="12">
    <location>
        <begin position="94"/>
        <end position="107"/>
    </location>
</feature>
<feature type="helix" evidence="12">
    <location>
        <begin position="113"/>
        <end position="116"/>
    </location>
</feature>
<feature type="helix" evidence="12">
    <location>
        <begin position="123"/>
        <end position="130"/>
    </location>
</feature>
<feature type="helix" evidence="12">
    <location>
        <begin position="134"/>
        <end position="138"/>
    </location>
</feature>
<feature type="turn" evidence="12">
    <location>
        <begin position="139"/>
        <end position="141"/>
    </location>
</feature>
<feature type="strand" evidence="12">
    <location>
        <begin position="142"/>
        <end position="145"/>
    </location>
</feature>
<feature type="strand" evidence="12">
    <location>
        <begin position="155"/>
        <end position="158"/>
    </location>
</feature>
<feature type="helix" evidence="12">
    <location>
        <begin position="160"/>
        <end position="181"/>
    </location>
</feature>
<feature type="helix" evidence="12">
    <location>
        <begin position="206"/>
        <end position="216"/>
    </location>
</feature>
<feature type="turn" evidence="12">
    <location>
        <begin position="217"/>
        <end position="219"/>
    </location>
</feature>
<feature type="helix" evidence="12">
    <location>
        <begin position="222"/>
        <end position="230"/>
    </location>
</feature>
<feature type="helix" evidence="11">
    <location>
        <begin position="297"/>
        <end position="299"/>
    </location>
</feature>
<evidence type="ECO:0000256" key="1">
    <source>
        <dbReference type="SAM" id="MobiDB-lite"/>
    </source>
</evidence>
<evidence type="ECO:0000269" key="2">
    <source>
    </source>
</evidence>
<evidence type="ECO:0000269" key="3">
    <source>
    </source>
</evidence>
<evidence type="ECO:0000269" key="4">
    <source>
    </source>
</evidence>
<evidence type="ECO:0000269" key="5">
    <source>
    </source>
</evidence>
<evidence type="ECO:0000305" key="6"/>
<evidence type="ECO:0007744" key="7">
    <source>
    </source>
</evidence>
<evidence type="ECO:0007744" key="8">
    <source>
    </source>
</evidence>
<evidence type="ECO:0007744" key="9">
    <source>
    </source>
</evidence>
<evidence type="ECO:0007744" key="10">
    <source>
    </source>
</evidence>
<evidence type="ECO:0007829" key="11">
    <source>
        <dbReference type="PDB" id="3P87"/>
    </source>
</evidence>
<evidence type="ECO:0007829" key="12">
    <source>
        <dbReference type="PDB" id="3PUF"/>
    </source>
</evidence>
<gene>
    <name type="primary">RNASEH2B</name>
    <name type="synonym">DLEU8</name>
</gene>
<comment type="function">
    <text evidence="2 5">Non catalytic subunit of RNase H2, an endonuclease that specifically degrades the RNA of RNA:DNA hybrids. Participates in DNA replication, possibly by mediating the removal of lagging-strand Okazaki fragment RNA primers during DNA replication. Mediates the excision of single ribonucleotides from DNA:RNA duplexes.</text>
</comment>
<comment type="subunit">
    <text evidence="5">The RNase H2 complex is a heterotrimer composed of the catalytic subunit RNASEH2A and the non-catalytic subunits RNASEH2B and RNASEH2C.</text>
</comment>
<comment type="interaction">
    <interactant intactId="EBI-9027329">
        <id>Q5TBB1</id>
    </interactant>
    <interactant intactId="EBI-2556139">
        <id>Q14202</id>
        <label>ZMYM3</label>
    </interactant>
    <organismsDiffer>false</organismsDiffer>
    <experiments>4</experiments>
</comment>
<comment type="subcellular location">
    <subcellularLocation>
        <location evidence="6">Nucleus</location>
    </subcellularLocation>
</comment>
<comment type="alternative products">
    <event type="alternative splicing"/>
    <isoform>
        <id>Q5TBB1-1</id>
        <name>1</name>
        <sequence type="displayed"/>
    </isoform>
    <isoform>
        <id>Q5TBB1-2</id>
        <name>2</name>
        <sequence type="described" ref="VSP_054039 VSP_054040"/>
    </isoform>
</comment>
<comment type="tissue specificity">
    <text evidence="2">Widely expressed.</text>
</comment>
<comment type="disease" evidence="2 3 4 5">
    <disease id="DI-00067">
        <name>Aicardi-Goutieres syndrome 2</name>
        <acronym>AGS2</acronym>
        <description>A form of Aicardi-Goutieres syndrome, a genetically heterogeneous disease characterized by cerebral atrophy, leukoencephalopathy, intracranial calcifications, chronic cerebrospinal fluid (CSF) lymphocytosis, increased CSF alpha-interferon, and negative serologic investigations for common prenatal infection. Clinical features as thrombocytopenia, hepatosplenomegaly and elevated hepatic transaminases along with intermittent fever may erroneously suggest an infective process. Severe neurological dysfunctions manifest in infancy as progressive microcephaly, spasticity, dystonic posturing and profound psychomotor retardation. Death often occurs in early childhood.</description>
        <dbReference type="MIM" id="610181"/>
    </disease>
    <text>The disease is caused by variants affecting the gene represented in this entry.</text>
</comment>
<comment type="similarity">
    <text evidence="6">Belongs to the RNase H2 subunit B family.</text>
</comment>
<comment type="sequence caution" evidence="6">
    <conflict type="miscellaneous discrepancy">
        <sequence resource="EMBL-CDS" id="AAH01397"/>
    </conflict>
    <text>Contaminating sequence. Potential poly-A sequence.</text>
</comment>
<comment type="sequence caution" evidence="6">
    <conflict type="miscellaneous discrepancy">
        <sequence resource="EMBL-CDS" id="AAH07332"/>
    </conflict>
    <text>Contaminating sequence. Potential poly-A sequence.</text>
</comment>
<comment type="sequence caution" evidence="6">
    <conflict type="miscellaneous discrepancy">
        <sequence resource="EMBL-CDS" id="AAH10174"/>
    </conflict>
    <text>Contaminating sequence. Potential poly-A sequence.</text>
</comment>
<protein>
    <recommendedName>
        <fullName>Ribonuclease H2 subunit B</fullName>
        <shortName>RNase H2 subunit B</shortName>
    </recommendedName>
    <alternativeName>
        <fullName>Aicardi-Goutieres syndrome 2 protein</fullName>
        <shortName>AGS2</shortName>
    </alternativeName>
    <alternativeName>
        <fullName>Deleted in lymphocytic leukemia 8</fullName>
    </alternativeName>
    <alternativeName>
        <fullName>Ribonuclease HI subunit B</fullName>
    </alternativeName>
</protein>
<organism>
    <name type="scientific">Homo sapiens</name>
    <name type="common">Human</name>
    <dbReference type="NCBI Taxonomy" id="9606"/>
    <lineage>
        <taxon>Eukaryota</taxon>
        <taxon>Metazoa</taxon>
        <taxon>Chordata</taxon>
        <taxon>Craniata</taxon>
        <taxon>Vertebrata</taxon>
        <taxon>Euteleostomi</taxon>
        <taxon>Mammalia</taxon>
        <taxon>Eutheria</taxon>
        <taxon>Euarchontoglires</taxon>
        <taxon>Primates</taxon>
        <taxon>Haplorrhini</taxon>
        <taxon>Catarrhini</taxon>
        <taxon>Hominidae</taxon>
        <taxon>Homo</taxon>
    </lineage>
</organism>
<sequence>MAAGVDCGDGVGARQHVFLVSEYLKDASKKMKNGLMFVKLVNPCSGEGAIYLFNMCLQQLFEVKVFKEKHHSWFINQSVQSGGLLHFATPVDPLFLLLHYLIKADKEGKFQPLDQVVVDNVFPNCILLLKLPGLEKLLHHVTEEKGNPEIDNKKYYKYSKEKTLKWLEKKVNQTVAALKTNNVNVSSRVQSTAFFSGDQASTDKEEDYIRYAHGLISDYIPKELSDDLSKYLKLPEPSASLPNPPSKKIKLSDEPVEAKEDYTKFNTKDLKTEKKNSKMTAAQKALAKVDKSGMKSIDTFFGVKNKKKIGKV</sequence>
<reference key="1">
    <citation type="submission" date="2004-09" db="EMBL/GenBank/DDBJ databases">
        <title>DLEU8, a novel conserved gene located in the CLL 13q14 deletion locus.</title>
        <authorList>
            <person name="Corcoran M.M."/>
        </authorList>
    </citation>
    <scope>NUCLEOTIDE SEQUENCE [MRNA] (ISOFORM 1)</scope>
</reference>
<reference key="2">
    <citation type="journal article" date="2004" name="Nat. Genet.">
        <title>Complete sequencing and characterization of 21,243 full-length human cDNAs.</title>
        <authorList>
            <person name="Ota T."/>
            <person name="Suzuki Y."/>
            <person name="Nishikawa T."/>
            <person name="Otsuki T."/>
            <person name="Sugiyama T."/>
            <person name="Irie R."/>
            <person name="Wakamatsu A."/>
            <person name="Hayashi K."/>
            <person name="Sato H."/>
            <person name="Nagai K."/>
            <person name="Kimura K."/>
            <person name="Makita H."/>
            <person name="Sekine M."/>
            <person name="Obayashi M."/>
            <person name="Nishi T."/>
            <person name="Shibahara T."/>
            <person name="Tanaka T."/>
            <person name="Ishii S."/>
            <person name="Yamamoto J."/>
            <person name="Saito K."/>
            <person name="Kawai Y."/>
            <person name="Isono Y."/>
            <person name="Nakamura Y."/>
            <person name="Nagahari K."/>
            <person name="Murakami K."/>
            <person name="Yasuda T."/>
            <person name="Iwayanagi T."/>
            <person name="Wagatsuma M."/>
            <person name="Shiratori A."/>
            <person name="Sudo H."/>
            <person name="Hosoiri T."/>
            <person name="Kaku Y."/>
            <person name="Kodaira H."/>
            <person name="Kondo H."/>
            <person name="Sugawara M."/>
            <person name="Takahashi M."/>
            <person name="Kanda K."/>
            <person name="Yokoi T."/>
            <person name="Furuya T."/>
            <person name="Kikkawa E."/>
            <person name="Omura Y."/>
            <person name="Abe K."/>
            <person name="Kamihara K."/>
            <person name="Katsuta N."/>
            <person name="Sato K."/>
            <person name="Tanikawa M."/>
            <person name="Yamazaki M."/>
            <person name="Ninomiya K."/>
            <person name="Ishibashi T."/>
            <person name="Yamashita H."/>
            <person name="Murakawa K."/>
            <person name="Fujimori K."/>
            <person name="Tanai H."/>
            <person name="Kimata M."/>
            <person name="Watanabe M."/>
            <person name="Hiraoka S."/>
            <person name="Chiba Y."/>
            <person name="Ishida S."/>
            <person name="Ono Y."/>
            <person name="Takiguchi S."/>
            <person name="Watanabe S."/>
            <person name="Yosida M."/>
            <person name="Hotuta T."/>
            <person name="Kusano J."/>
            <person name="Kanehori K."/>
            <person name="Takahashi-Fujii A."/>
            <person name="Hara H."/>
            <person name="Tanase T.-O."/>
            <person name="Nomura Y."/>
            <person name="Togiya S."/>
            <person name="Komai F."/>
            <person name="Hara R."/>
            <person name="Takeuchi K."/>
            <person name="Arita M."/>
            <person name="Imose N."/>
            <person name="Musashino K."/>
            <person name="Yuuki H."/>
            <person name="Oshima A."/>
            <person name="Sasaki N."/>
            <person name="Aotsuka S."/>
            <person name="Yoshikawa Y."/>
            <person name="Matsunawa H."/>
            <person name="Ichihara T."/>
            <person name="Shiohata N."/>
            <person name="Sano S."/>
            <person name="Moriya S."/>
            <person name="Momiyama H."/>
            <person name="Satoh N."/>
            <person name="Takami S."/>
            <person name="Terashima Y."/>
            <person name="Suzuki O."/>
            <person name="Nakagawa S."/>
            <person name="Senoh A."/>
            <person name="Mizoguchi H."/>
            <person name="Goto Y."/>
            <person name="Shimizu F."/>
            <person name="Wakebe H."/>
            <person name="Hishigaki H."/>
            <person name="Watanabe T."/>
            <person name="Sugiyama A."/>
            <person name="Takemoto M."/>
            <person name="Kawakami B."/>
            <person name="Yamazaki M."/>
            <person name="Watanabe K."/>
            <person name="Kumagai A."/>
            <person name="Itakura S."/>
            <person name="Fukuzumi Y."/>
            <person name="Fujimori Y."/>
            <person name="Komiyama M."/>
            <person name="Tashiro H."/>
            <person name="Tanigami A."/>
            <person name="Fujiwara T."/>
            <person name="Ono T."/>
            <person name="Yamada K."/>
            <person name="Fujii Y."/>
            <person name="Ozaki K."/>
            <person name="Hirao M."/>
            <person name="Ohmori Y."/>
            <person name="Kawabata A."/>
            <person name="Hikiji T."/>
            <person name="Kobatake N."/>
            <person name="Inagaki H."/>
            <person name="Ikema Y."/>
            <person name="Okamoto S."/>
            <person name="Okitani R."/>
            <person name="Kawakami T."/>
            <person name="Noguchi S."/>
            <person name="Itoh T."/>
            <person name="Shigeta K."/>
            <person name="Senba T."/>
            <person name="Matsumura K."/>
            <person name="Nakajima Y."/>
            <person name="Mizuno T."/>
            <person name="Morinaga M."/>
            <person name="Sasaki M."/>
            <person name="Togashi T."/>
            <person name="Oyama M."/>
            <person name="Hata H."/>
            <person name="Watanabe M."/>
            <person name="Komatsu T."/>
            <person name="Mizushima-Sugano J."/>
            <person name="Satoh T."/>
            <person name="Shirai Y."/>
            <person name="Takahashi Y."/>
            <person name="Nakagawa K."/>
            <person name="Okumura K."/>
            <person name="Nagase T."/>
            <person name="Nomura N."/>
            <person name="Kikuchi H."/>
            <person name="Masuho Y."/>
            <person name="Yamashita R."/>
            <person name="Nakai K."/>
            <person name="Yada T."/>
            <person name="Nakamura Y."/>
            <person name="Ohara O."/>
            <person name="Isogai T."/>
            <person name="Sugano S."/>
        </authorList>
    </citation>
    <scope>NUCLEOTIDE SEQUENCE [LARGE SCALE MRNA] (ISOFORM 1)</scope>
</reference>
<reference key="3">
    <citation type="submission" date="2005-04" db="EMBL/GenBank/DDBJ databases">
        <authorList>
            <person name="Suzuki Y."/>
            <person name="Sugano S."/>
            <person name="Totoki Y."/>
            <person name="Toyoda A."/>
            <person name="Takeda T."/>
            <person name="Sakaki Y."/>
            <person name="Tanaka A."/>
            <person name="Yokoyama S."/>
        </authorList>
    </citation>
    <scope>NUCLEOTIDE SEQUENCE [LARGE SCALE MRNA] (ISOFORM 1)</scope>
    <source>
        <tissue>Testis</tissue>
    </source>
</reference>
<reference key="4">
    <citation type="journal article" date="2004" name="Nature">
        <title>The DNA sequence and analysis of human chromosome 13.</title>
        <authorList>
            <person name="Dunham A."/>
            <person name="Matthews L.H."/>
            <person name="Burton J."/>
            <person name="Ashurst J.L."/>
            <person name="Howe K.L."/>
            <person name="Ashcroft K.J."/>
            <person name="Beare D.M."/>
            <person name="Burford D.C."/>
            <person name="Hunt S.E."/>
            <person name="Griffiths-Jones S."/>
            <person name="Jones M.C."/>
            <person name="Keenan S.J."/>
            <person name="Oliver K."/>
            <person name="Scott C.E."/>
            <person name="Ainscough R."/>
            <person name="Almeida J.P."/>
            <person name="Ambrose K.D."/>
            <person name="Andrews D.T."/>
            <person name="Ashwell R.I.S."/>
            <person name="Babbage A.K."/>
            <person name="Bagguley C.L."/>
            <person name="Bailey J."/>
            <person name="Bannerjee R."/>
            <person name="Barlow K.F."/>
            <person name="Bates K."/>
            <person name="Beasley H."/>
            <person name="Bird C.P."/>
            <person name="Bray-Allen S."/>
            <person name="Brown A.J."/>
            <person name="Brown J.Y."/>
            <person name="Burrill W."/>
            <person name="Carder C."/>
            <person name="Carter N.P."/>
            <person name="Chapman J.C."/>
            <person name="Clamp M.E."/>
            <person name="Clark S.Y."/>
            <person name="Clarke G."/>
            <person name="Clee C.M."/>
            <person name="Clegg S.C."/>
            <person name="Cobley V."/>
            <person name="Collins J.E."/>
            <person name="Corby N."/>
            <person name="Coville G.J."/>
            <person name="Deloukas P."/>
            <person name="Dhami P."/>
            <person name="Dunham I."/>
            <person name="Dunn M."/>
            <person name="Earthrowl M.E."/>
            <person name="Ellington A.G."/>
            <person name="Faulkner L."/>
            <person name="Frankish A.G."/>
            <person name="Frankland J."/>
            <person name="French L."/>
            <person name="Garner P."/>
            <person name="Garnett J."/>
            <person name="Gilbert J.G.R."/>
            <person name="Gilson C.J."/>
            <person name="Ghori J."/>
            <person name="Grafham D.V."/>
            <person name="Gribble S.M."/>
            <person name="Griffiths C."/>
            <person name="Hall R.E."/>
            <person name="Hammond S."/>
            <person name="Harley J.L."/>
            <person name="Hart E.A."/>
            <person name="Heath P.D."/>
            <person name="Howden P.J."/>
            <person name="Huckle E.J."/>
            <person name="Hunt P.J."/>
            <person name="Hunt A.R."/>
            <person name="Johnson C."/>
            <person name="Johnson D."/>
            <person name="Kay M."/>
            <person name="Kimberley A.M."/>
            <person name="King A."/>
            <person name="Laird G.K."/>
            <person name="Langford C.J."/>
            <person name="Lawlor S."/>
            <person name="Leongamornlert D.A."/>
            <person name="Lloyd D.M."/>
            <person name="Lloyd C."/>
            <person name="Loveland J.E."/>
            <person name="Lovell J."/>
            <person name="Martin S."/>
            <person name="Mashreghi-Mohammadi M."/>
            <person name="McLaren S.J."/>
            <person name="McMurray A."/>
            <person name="Milne S."/>
            <person name="Moore M.J.F."/>
            <person name="Nickerson T."/>
            <person name="Palmer S.A."/>
            <person name="Pearce A.V."/>
            <person name="Peck A.I."/>
            <person name="Pelan S."/>
            <person name="Phillimore B."/>
            <person name="Porter K.M."/>
            <person name="Rice C.M."/>
            <person name="Searle S."/>
            <person name="Sehra H.K."/>
            <person name="Shownkeen R."/>
            <person name="Skuce C.D."/>
            <person name="Smith M."/>
            <person name="Steward C.A."/>
            <person name="Sycamore N."/>
            <person name="Tester J."/>
            <person name="Thomas D.W."/>
            <person name="Tracey A."/>
            <person name="Tromans A."/>
            <person name="Tubby B."/>
            <person name="Wall M."/>
            <person name="Wallis J.M."/>
            <person name="West A.P."/>
            <person name="Whitehead S.L."/>
            <person name="Willey D.L."/>
            <person name="Wilming L."/>
            <person name="Wray P.W."/>
            <person name="Wright M.W."/>
            <person name="Young L."/>
            <person name="Coulson A."/>
            <person name="Durbin R.M."/>
            <person name="Hubbard T."/>
            <person name="Sulston J.E."/>
            <person name="Beck S."/>
            <person name="Bentley D.R."/>
            <person name="Rogers J."/>
            <person name="Ross M.T."/>
        </authorList>
    </citation>
    <scope>NUCLEOTIDE SEQUENCE [LARGE SCALE GENOMIC DNA]</scope>
</reference>
<reference key="5">
    <citation type="submission" date="2005-07" db="EMBL/GenBank/DDBJ databases">
        <authorList>
            <person name="Mural R.J."/>
            <person name="Istrail S."/>
            <person name="Sutton G.G."/>
            <person name="Florea L."/>
            <person name="Halpern A.L."/>
            <person name="Mobarry C.M."/>
            <person name="Lippert R."/>
            <person name="Walenz B."/>
            <person name="Shatkay H."/>
            <person name="Dew I."/>
            <person name="Miller J.R."/>
            <person name="Flanigan M.J."/>
            <person name="Edwards N.J."/>
            <person name="Bolanos R."/>
            <person name="Fasulo D."/>
            <person name="Halldorsson B.V."/>
            <person name="Hannenhalli S."/>
            <person name="Turner R."/>
            <person name="Yooseph S."/>
            <person name="Lu F."/>
            <person name="Nusskern D.R."/>
            <person name="Shue B.C."/>
            <person name="Zheng X.H."/>
            <person name="Zhong F."/>
            <person name="Delcher A.L."/>
            <person name="Huson D.H."/>
            <person name="Kravitz S.A."/>
            <person name="Mouchard L."/>
            <person name="Reinert K."/>
            <person name="Remington K.A."/>
            <person name="Clark A.G."/>
            <person name="Waterman M.S."/>
            <person name="Eichler E.E."/>
            <person name="Adams M.D."/>
            <person name="Hunkapiller M.W."/>
            <person name="Myers E.W."/>
            <person name="Venter J.C."/>
        </authorList>
    </citation>
    <scope>NUCLEOTIDE SEQUENCE [LARGE SCALE GENOMIC DNA]</scope>
</reference>
<reference key="6">
    <citation type="journal article" date="2004" name="Genome Res.">
        <title>The status, quality, and expansion of the NIH full-length cDNA project: the Mammalian Gene Collection (MGC).</title>
        <authorList>
            <consortium name="The MGC Project Team"/>
        </authorList>
    </citation>
    <scope>NUCLEOTIDE SEQUENCE [LARGE SCALE MRNA] OF 1-308 (ISOFORM 1)</scope>
    <source>
        <tissue>Skin</tissue>
    </source>
</reference>
<reference key="7">
    <citation type="journal article" date="2009" name="Science">
        <title>Lysine acetylation targets protein complexes and co-regulates major cellular functions.</title>
        <authorList>
            <person name="Choudhary C."/>
            <person name="Kumar C."/>
            <person name="Gnad F."/>
            <person name="Nielsen M.L."/>
            <person name="Rehman M."/>
            <person name="Walther T.C."/>
            <person name="Olsen J.V."/>
            <person name="Mann M."/>
        </authorList>
    </citation>
    <scope>ACETYLATION [LARGE SCALE ANALYSIS] AT LYS-295</scope>
    <scope>IDENTIFICATION BY MASS SPECTROMETRY [LARGE SCALE ANALYSIS]</scope>
</reference>
<reference key="8">
    <citation type="journal article" date="2011" name="BMC Syst. Biol.">
        <title>Initial characterization of the human central proteome.</title>
        <authorList>
            <person name="Burkard T.R."/>
            <person name="Planyavsky M."/>
            <person name="Kaupe I."/>
            <person name="Breitwieser F.P."/>
            <person name="Buerckstuemmer T."/>
            <person name="Bennett K.L."/>
            <person name="Superti-Furga G."/>
            <person name="Colinge J."/>
        </authorList>
    </citation>
    <scope>IDENTIFICATION BY MASS SPECTROMETRY [LARGE SCALE ANALYSIS]</scope>
</reference>
<reference key="9">
    <citation type="journal article" date="2012" name="Mol. Cell. Proteomics">
        <title>Comparative large-scale characterisation of plant vs. mammal proteins reveals similar and idiosyncratic N-alpha acetylation features.</title>
        <authorList>
            <person name="Bienvenut W.V."/>
            <person name="Sumpton D."/>
            <person name="Martinez A."/>
            <person name="Lilla S."/>
            <person name="Espagne C."/>
            <person name="Meinnel T."/>
            <person name="Giglione C."/>
        </authorList>
    </citation>
    <scope>ACETYLATION [LARGE SCALE ANALYSIS] AT ALA-2</scope>
    <scope>CLEAVAGE OF INITIATOR METHIONINE [LARGE SCALE ANALYSIS]</scope>
    <scope>IDENTIFICATION BY MASS SPECTROMETRY [LARGE SCALE ANALYSIS]</scope>
</reference>
<reference key="10">
    <citation type="journal article" date="2012" name="Proc. Natl. Acad. Sci. U.S.A.">
        <title>N-terminal acetylome analyses and functional insights of the N-terminal acetyltransferase NatB.</title>
        <authorList>
            <person name="Van Damme P."/>
            <person name="Lasa M."/>
            <person name="Polevoda B."/>
            <person name="Gazquez C."/>
            <person name="Elosegui-Artola A."/>
            <person name="Kim D.S."/>
            <person name="De Juan-Pardo E."/>
            <person name="Demeyer K."/>
            <person name="Hole K."/>
            <person name="Larrea E."/>
            <person name="Timmerman E."/>
            <person name="Prieto J."/>
            <person name="Arnesen T."/>
            <person name="Sherman F."/>
            <person name="Gevaert K."/>
            <person name="Aldabe R."/>
        </authorList>
    </citation>
    <scope>ACETYLATION [LARGE SCALE ANALYSIS] AT ALA-2</scope>
    <scope>CLEAVAGE OF INITIATOR METHIONINE [LARGE SCALE ANALYSIS]</scope>
    <scope>IDENTIFICATION BY MASS SPECTROMETRY [LARGE SCALE ANALYSIS]</scope>
</reference>
<reference key="11">
    <citation type="journal article" date="2013" name="J. Proteome Res.">
        <title>Toward a comprehensive characterization of a human cancer cell phosphoproteome.</title>
        <authorList>
            <person name="Zhou H."/>
            <person name="Di Palma S."/>
            <person name="Preisinger C."/>
            <person name="Peng M."/>
            <person name="Polat A.N."/>
            <person name="Heck A.J."/>
            <person name="Mohammed S."/>
        </authorList>
    </citation>
    <scope>PHOSPHORYLATION [LARGE SCALE ANALYSIS] AT SER-296</scope>
    <scope>IDENTIFICATION BY MASS SPECTROMETRY [LARGE SCALE ANALYSIS]</scope>
    <source>
        <tissue>Erythroleukemia</tissue>
    </source>
</reference>
<reference key="12">
    <citation type="journal article" date="2011" name="J. Biol. Chem.">
        <title>The structural and biochemical characterization of human RNase H2 complex reveals the molecular basis for substrate recognition and Aicardi-Goutieres syndrome defects.</title>
        <authorList>
            <person name="Figiel M."/>
            <person name="Chon H."/>
            <person name="Cerritelli S.M."/>
            <person name="Cybulska M."/>
            <person name="Crouch R.J."/>
            <person name="Nowotny M."/>
        </authorList>
    </citation>
    <scope>X-RAY CRYSTALLOGRAPHY (3.1 ANGSTROMS) OF 14-233</scope>
    <scope>SUBUNIT</scope>
    <scope>FUNCTION</scope>
    <scope>CHARACTERIZATION OF VARIANTS AGS2 LEU-73; SER-83; ARG-86 AND HIS-219</scope>
</reference>
<reference key="13">
    <citation type="journal article" date="2006" name="Nat. Genet.">
        <title>Mutations in genes encoding ribonuclease H2 subunits cause Aicardi-Goutieres syndrome and mimic congenital viral brain infection.</title>
        <authorList>
            <person name="Crow Y.J."/>
            <person name="Leitch A."/>
            <person name="Hayward B.E."/>
            <person name="Garner A."/>
            <person name="Parmar R."/>
            <person name="Griffith E."/>
            <person name="Ali M."/>
            <person name="Semple C."/>
            <person name="Aicardi J."/>
            <person name="Babul-Hirji R."/>
            <person name="Baumann C."/>
            <person name="Baxter P."/>
            <person name="Bertini E."/>
            <person name="Chandler K.E."/>
            <person name="Chitayat D."/>
            <person name="Cau D."/>
            <person name="Dery C."/>
            <person name="Fazzi E."/>
            <person name="Goizet C."/>
            <person name="King M.D."/>
            <person name="Klepper J."/>
            <person name="Lacombe D."/>
            <person name="Lanzi G."/>
            <person name="Lyall H."/>
            <person name="Martinez-Frias M.L."/>
            <person name="Mathieu M."/>
            <person name="McKeown C."/>
            <person name="Monier A."/>
            <person name="Oade Y."/>
            <person name="Quarrell O.W."/>
            <person name="Rittey C.D."/>
            <person name="Rogers R.C."/>
            <person name="Sanchis A."/>
            <person name="Stephenson J.B.P."/>
            <person name="Tacke U."/>
            <person name="Till M."/>
            <person name="Tolmie J.L."/>
            <person name="Tomlin P."/>
            <person name="Voit T."/>
            <person name="Weschke B."/>
            <person name="Woods C.G."/>
            <person name="Lebon P."/>
            <person name="Bonthron D.T."/>
            <person name="Ponting C.P."/>
            <person name="Jackson A.P."/>
        </authorList>
    </citation>
    <scope>VARIANTS AGS2 ARG-60; ARG-86; THR-162; ILE-163; THR-177; GLY-185 AND HIS-219</scope>
    <scope>FUNCTION</scope>
    <scope>TISSUE SPECIFICITY</scope>
    <scope>INTERACTION WITH RNASEH2A AND RNASEH2C</scope>
</reference>
<reference key="14">
    <citation type="journal article" date="2007" name="Am. J. Hum. Genet.">
        <title>Clinical and molecular phenotype of Aicardi-Goutieres syndrome.</title>
        <authorList>
            <person name="Rice G."/>
            <person name="Patrick T."/>
            <person name="Parmar R."/>
            <person name="Taylor C.F."/>
            <person name="Aeby A."/>
            <person name="Aicardi J."/>
            <person name="Artuch R."/>
            <person name="Montalto S.A."/>
            <person name="Bacino C.A."/>
            <person name="Barroso B."/>
            <person name="Baxter P."/>
            <person name="Benko W.S."/>
            <person name="Bergmann C."/>
            <person name="Bertini E."/>
            <person name="Biancheri R."/>
            <person name="Blair E.M."/>
            <person name="Blau N."/>
            <person name="Bonthron D.T."/>
            <person name="Briggs T."/>
            <person name="Brueton L.A."/>
            <person name="Brunner H.G."/>
            <person name="Burke C.J."/>
            <person name="Carr I.M."/>
            <person name="Carvalho D.R."/>
            <person name="Chandler K.E."/>
            <person name="Christen H.J."/>
            <person name="Corry P.C."/>
            <person name="Cowan F.M."/>
            <person name="Cox H."/>
            <person name="D'Arrigo S."/>
            <person name="Dean J."/>
            <person name="De Laet C."/>
            <person name="De Praeter C."/>
            <person name="Dery C."/>
            <person name="Ferrie C.D."/>
            <person name="Flintoff K."/>
            <person name="Frints S.G."/>
            <person name="Garcia-Cazorla A."/>
            <person name="Gener B."/>
            <person name="Goizet C."/>
            <person name="Goutieres F."/>
            <person name="Green A.J."/>
            <person name="Guet A."/>
            <person name="Hamel B.C."/>
            <person name="Hayward B.E."/>
            <person name="Heiberg A."/>
            <person name="Hennekam R.C."/>
            <person name="Husson M."/>
            <person name="Jackson A.P."/>
            <person name="Jayatunga R."/>
            <person name="Jiang Y.H."/>
            <person name="Kant S.G."/>
            <person name="Kao A."/>
            <person name="King M.D."/>
            <person name="Kingston H.M."/>
            <person name="Klepper J."/>
            <person name="van der Knaap M.S."/>
            <person name="Kornberg A.J."/>
            <person name="Kotzot D."/>
            <person name="Kratzer W."/>
            <person name="Lacombe D."/>
            <person name="Lagae L."/>
            <person name="Landrieu P.G."/>
            <person name="Lanzi G."/>
            <person name="Leitch A."/>
            <person name="Lim M.J."/>
            <person name="Livingston J.H."/>
            <person name="Lourenco C.M."/>
            <person name="Lyall E.G."/>
            <person name="Lynch S.A."/>
            <person name="Lyons M.J."/>
            <person name="Marom D."/>
            <person name="McClure J.P."/>
            <person name="McWilliam R."/>
            <person name="Melancon S.B."/>
            <person name="Mewasingh L.D."/>
            <person name="Moutard M.L."/>
            <person name="Nischal K.K."/>
            <person name="Ostergaard J.R."/>
            <person name="Prendiville J."/>
            <person name="Rasmussen M."/>
            <person name="Rogers R.C."/>
            <person name="Roland D."/>
            <person name="Rosser E.M."/>
            <person name="Rostasy K."/>
            <person name="Roubertie A."/>
            <person name="Sanchis A."/>
            <person name="Schiffmann R."/>
            <person name="Scholl-Burgi S."/>
            <person name="Seal S."/>
            <person name="Shalev S.A."/>
            <person name="Corcoles C.S."/>
            <person name="Sinha G.P."/>
            <person name="Soler D."/>
            <person name="Spiegel R."/>
            <person name="Stephenson J.B."/>
            <person name="Tacke U."/>
            <person name="Tan T.Y."/>
            <person name="Till M."/>
            <person name="Tolmie J.L."/>
            <person name="Tomlin P."/>
            <person name="Vagnarelli F."/>
            <person name="Valente E.M."/>
            <person name="Van Coster R.N."/>
            <person name="Van der Aa N."/>
            <person name="Vanderver A."/>
            <person name="Vles J.S."/>
            <person name="Voit T."/>
            <person name="Wassmer E."/>
            <person name="Weschke B."/>
            <person name="Whiteford M.L."/>
            <person name="Willemsen M.A."/>
            <person name="Zankl A."/>
            <person name="Zuberi S.M."/>
            <person name="Orcesi S."/>
            <person name="Fazzi E."/>
            <person name="Lebon P."/>
            <person name="Crow Y.J."/>
        </authorList>
    </citation>
    <scope>VARIANTS AGS2 HIS-43; ARG-60; LEU-73; SER-83; ARG-86; PHE-138; ILE-159; THR-162; ILE-163; THR-177; MET-183; GLY-185 AND HIS-219</scope>
</reference>
<reference key="15">
    <citation type="journal article" date="2010" name="Arthritis Rheum.">
        <title>Expanding the phenotypic spectrum of lupus erythematosus in Aicardi-Goutieres syndrome.</title>
        <authorList>
            <person name="Ramantani G."/>
            <person name="Kohlhase J."/>
            <person name="Hertzberg C."/>
            <person name="Innes A.M."/>
            <person name="Engel K."/>
            <person name="Hunger S."/>
            <person name="Borozdin W."/>
            <person name="Mah J.K."/>
            <person name="Ungerath K."/>
            <person name="Walkenhorst H."/>
            <person name="Richardt H.H."/>
            <person name="Buckard J."/>
            <person name="Bevot A."/>
            <person name="Siegel C."/>
            <person name="von Stuelpnagel C."/>
            <person name="Ikonomidou C."/>
            <person name="Thomas K."/>
            <person name="Proud V."/>
            <person name="Niemann F."/>
            <person name="Wieczorek D."/>
            <person name="Haeusler M."/>
            <person name="Niggemann P."/>
            <person name="Baltaci V."/>
            <person name="Conrad K."/>
            <person name="Lebon P."/>
            <person name="Lee-Kirsch M.A."/>
        </authorList>
    </citation>
    <scope>VARIANTS AGS2 THR-177 AND PRO-229</scope>
</reference>
<proteinExistence type="evidence at protein level"/>